<sequence>MNLIICCTPLQVLIAEKIIAKFPHMPFYGVMLSTVSNKKFDFYAKRLAQQCQGFFSMVQHKDRFNLLKEILYLKRTFSGKHFDQVFVANINDLQIQFLLSAIDFNLLNTFDDGTINIVPNSLFYQDDPATLQRKLINVLLGNKYSIQSLRALSHTHYTIYKGFKNIIERVEPIELVAADNSEKVTSAVINVLLGQPVFAEDERNIALAERVIKQFNIHYYLPHPREKYRLAQVNYIDTELIFEDYILQQCQTHKYCVYTYFSSAIINIMNKSDNIEVVALKIDTENPAYDACYDLFDELGVNVIDIRE</sequence>
<gene>
    <name type="primary">lst</name>
    <name type="ordered locus">PM0508</name>
</gene>
<accession>Q9CNC4</accession>
<feature type="chain" id="PRO_0000080575" description="CMP-N-acetylneuraminate:beta-galactoside alpha-2,3-sialyltransferase">
    <location>
        <begin position="1"/>
        <end position="308"/>
    </location>
</feature>
<feature type="active site" description="Proton acceptor" evidence="1">
    <location>
        <position position="201"/>
    </location>
</feature>
<feature type="active site" description="Proton donor" evidence="1">
    <location>
        <position position="223"/>
    </location>
</feature>
<feature type="binding site" evidence="1">
    <location>
        <begin position="221"/>
        <end position="225"/>
    </location>
    <ligand>
        <name>CMP-N-acetyl-beta-neuraminate</name>
        <dbReference type="ChEBI" id="CHEBI:57812"/>
    </ligand>
</feature>
<feature type="binding site" evidence="1">
    <location>
        <begin position="242"/>
        <end position="243"/>
    </location>
    <ligand>
        <name>CMP-N-acetyl-beta-neuraminate</name>
        <dbReference type="ChEBI" id="CHEBI:57812"/>
    </ligand>
</feature>
<feature type="binding site" evidence="1">
    <location>
        <begin position="262"/>
        <end position="263"/>
    </location>
    <ligand>
        <name>CMP-N-acetyl-beta-neuraminate</name>
        <dbReference type="ChEBI" id="CHEBI:57812"/>
    </ligand>
</feature>
<feature type="sequence variant" description="In strain: ATCC 15742 / P1059.">
    <original>M</original>
    <variation>T</variation>
    <location>
        <position position="25"/>
    </location>
</feature>
<keyword id="KW-0328">Glycosyltransferase</keyword>
<keyword id="KW-1185">Reference proteome</keyword>
<keyword id="KW-0808">Transferase</keyword>
<comment type="function">
    <text evidence="2">Catalyzes the transfer of sialic acid from the substrate CMP-N-acetylneuraminate to lactosyl lipids as preferred acceptor substrates in vitro, forming alpha-2,3-linked sialosides. Beta-1,4-linked galactosyl lipids are better substrates than beta-1,3-linked galactosyl lipids. The natural acceptor substrate may be cell surface oligosaccharides in lipooligosaccharide (LOS), whose sialylation has been demonstrated vital for the virulence of P.multocida.</text>
</comment>
<comment type="cofactor">
    <text evidence="2">Divalent metal cations are not required for the alpha-2,3-sialyltransferase activity.</text>
</comment>
<comment type="biophysicochemical properties">
    <kinetics>
        <KM evidence="2">1.3 mM for CMP-N-acetylneuraminate</KM>
        <KM evidence="2">4.1 mM for Lac-beta-Pro-triazole-C14</KM>
        <KM evidence="2">28 mM for Lac-beta-Pro-2AA</KM>
        <text evidence="2">kcat is 12 sec(-1) for the sialylation of Lac-beta-Pro-triazole-C14. kcat is 7.9 sec(-1) for the sialylation of Lac-beta-Pro-2AA.</text>
    </kinetics>
    <phDependence>
        <text evidence="2">Optimum pH is 6.0. Active in a broad pH range of 4.5-10.0. Low activity is found at pH 10.0 and no significant activity is found at pH 4.0.</text>
    </phDependence>
</comment>
<comment type="biotechnology">
    <text evidence="2">Has been used successfully in the preparative scale synthesis of sialyllactosyl sphingosine (lyso-GM3), which is an important glycolipid and an intermediate for synthesizing more complex glycolipids such as gangliosides.</text>
</comment>
<comment type="similarity">
    <text evidence="4">Belongs to the glycosyltransferase 52 family.</text>
</comment>
<evidence type="ECO:0000250" key="1">
    <source>
        <dbReference type="UniProtKB" id="P72097"/>
    </source>
</evidence>
<evidence type="ECO:0000269" key="2">
    <source>
    </source>
</evidence>
<evidence type="ECO:0000303" key="3">
    <source>
    </source>
</evidence>
<evidence type="ECO:0000305" key="4"/>
<evidence type="ECO:0000305" key="5">
    <source>
    </source>
</evidence>
<proteinExistence type="evidence at protein level"/>
<dbReference type="EC" id="2.4.99.-" evidence="2"/>
<dbReference type="EMBL" id="AE004439">
    <property type="protein sequence ID" value="AAK02592.1"/>
    <property type="molecule type" value="Genomic_DNA"/>
</dbReference>
<dbReference type="RefSeq" id="WP_010906695.1">
    <property type="nucleotide sequence ID" value="NC_002663.1"/>
</dbReference>
<dbReference type="SMR" id="Q9CNC4"/>
<dbReference type="STRING" id="272843.PM0508"/>
<dbReference type="CAZy" id="GT52">
    <property type="family name" value="Glycosyltransferase Family 52"/>
</dbReference>
<dbReference type="EnsemblBacteria" id="AAK02592">
    <property type="protein sequence ID" value="AAK02592"/>
    <property type="gene ID" value="PM0508"/>
</dbReference>
<dbReference type="KEGG" id="pmu:PM0508"/>
<dbReference type="PATRIC" id="fig|272843.6.peg.514"/>
<dbReference type="HOGENOM" id="CLU_076077_0_0_6"/>
<dbReference type="OrthoDB" id="2339372at2"/>
<dbReference type="Proteomes" id="UP000000809">
    <property type="component" value="Chromosome"/>
</dbReference>
<dbReference type="GO" id="GO:0016757">
    <property type="term" value="F:glycosyltransferase activity"/>
    <property type="evidence" value="ECO:0007669"/>
    <property type="project" value="UniProtKB-KW"/>
</dbReference>
<dbReference type="Gene3D" id="3.30.370.20">
    <property type="match status" value="1"/>
</dbReference>
<dbReference type="InterPro" id="IPR012477">
    <property type="entry name" value="Glyco_transf_52"/>
</dbReference>
<dbReference type="Pfam" id="PF07922">
    <property type="entry name" value="Glyco_transf_52"/>
    <property type="match status" value="1"/>
</dbReference>
<organism>
    <name type="scientific">Pasteurella multocida (strain Pm70)</name>
    <dbReference type="NCBI Taxonomy" id="272843"/>
    <lineage>
        <taxon>Bacteria</taxon>
        <taxon>Pseudomonadati</taxon>
        <taxon>Pseudomonadota</taxon>
        <taxon>Gammaproteobacteria</taxon>
        <taxon>Pasteurellales</taxon>
        <taxon>Pasteurellaceae</taxon>
        <taxon>Pasteurella</taxon>
    </lineage>
</organism>
<protein>
    <recommendedName>
        <fullName evidence="5">CMP-N-acetylneuraminate:beta-galactoside alpha-2,3-sialyltransferase</fullName>
        <shortName evidence="5">CMP-Neu5Ac:beta-galactoside alpha-2,3-sialyltransferase</shortName>
        <ecNumber evidence="2">2.4.99.-</ecNumber>
    </recommendedName>
    <alternativeName>
        <fullName evidence="3">Glycolipid alpha-2,3-sialyltransferase</fullName>
    </alternativeName>
    <alternativeName>
        <fullName evidence="3">PmST2</fullName>
    </alternativeName>
</protein>
<reference key="1">
    <citation type="journal article" date="2011" name="Glycobiology">
        <title>PmST2: a novel Pasteurella multocida glycolipid alpha2-3-sialyltransferase.</title>
        <authorList>
            <person name="Thon V."/>
            <person name="Lau K."/>
            <person name="Yu H."/>
            <person name="Tran B.K."/>
            <person name="Chen X."/>
        </authorList>
    </citation>
    <scope>NUCLEOTIDE SEQUENCE [GENOMIC DNA]</scope>
    <scope>FUNCTION</scope>
    <scope>CATALYTIC ACTIVITY</scope>
    <scope>BIOPHYSICOCHEMICAL PROPERTIES</scope>
    <scope>COFACTOR</scope>
    <scope>BIOTECHNOLOGY</scope>
    <source>
        <strain>ATCC 15742 / P1059</strain>
    </source>
</reference>
<reference key="2">
    <citation type="journal article" date="2001" name="Proc. Natl. Acad. Sci. U.S.A.">
        <title>Complete genomic sequence of Pasteurella multocida Pm70.</title>
        <authorList>
            <person name="May B.J."/>
            <person name="Zhang Q."/>
            <person name="Li L.L."/>
            <person name="Paustian M.L."/>
            <person name="Whittam T.S."/>
            <person name="Kapur V."/>
        </authorList>
    </citation>
    <scope>NUCLEOTIDE SEQUENCE [LARGE SCALE GENOMIC DNA]</scope>
    <source>
        <strain>Pm70</strain>
    </source>
</reference>
<name>LST_PASMU</name>